<protein>
    <recommendedName>
        <fullName evidence="1">Potassium/proton antiporter CemA</fullName>
    </recommendedName>
    <alternativeName>
        <fullName evidence="1">Chloroplast envelope membrane protein A</fullName>
        <shortName evidence="1">CemA</shortName>
    </alternativeName>
</protein>
<feature type="chain" id="PRO_0000293518" description="Potassium/proton antiporter CemA">
    <location>
        <begin position="1"/>
        <end position="230"/>
    </location>
</feature>
<feature type="transmembrane region" description="Helical" evidence="1">
    <location>
        <begin position="7"/>
        <end position="27"/>
    </location>
</feature>
<feature type="transmembrane region" description="Helical" evidence="1">
    <location>
        <begin position="106"/>
        <end position="126"/>
    </location>
</feature>
<feature type="transmembrane region" description="Helical" evidence="1">
    <location>
        <begin position="145"/>
        <end position="165"/>
    </location>
</feature>
<feature type="transmembrane region" description="Helical" evidence="1">
    <location>
        <begin position="181"/>
        <end position="201"/>
    </location>
</feature>
<geneLocation type="chloroplast"/>
<organism>
    <name type="scientific">Hordeum vulgare</name>
    <name type="common">Barley</name>
    <dbReference type="NCBI Taxonomy" id="4513"/>
    <lineage>
        <taxon>Eukaryota</taxon>
        <taxon>Viridiplantae</taxon>
        <taxon>Streptophyta</taxon>
        <taxon>Embryophyta</taxon>
        <taxon>Tracheophyta</taxon>
        <taxon>Spermatophyta</taxon>
        <taxon>Magnoliopsida</taxon>
        <taxon>Liliopsida</taxon>
        <taxon>Poales</taxon>
        <taxon>Poaceae</taxon>
        <taxon>BOP clade</taxon>
        <taxon>Pooideae</taxon>
        <taxon>Triticodae</taxon>
        <taxon>Triticeae</taxon>
        <taxon>Hordeinae</taxon>
        <taxon>Hordeum</taxon>
    </lineage>
</organism>
<evidence type="ECO:0000255" key="1">
    <source>
        <dbReference type="HAMAP-Rule" id="MF_01308"/>
    </source>
</evidence>
<evidence type="ECO:0000305" key="2"/>
<name>CEMA_HORVU</name>
<keyword id="KW-0050">Antiport</keyword>
<keyword id="KW-0150">Chloroplast</keyword>
<keyword id="KW-0375">Hydrogen ion transport</keyword>
<keyword id="KW-0406">Ion transport</keyword>
<keyword id="KW-0472">Membrane</keyword>
<keyword id="KW-0934">Plastid</keyword>
<keyword id="KW-1001">Plastid inner membrane</keyword>
<keyword id="KW-0630">Potassium</keyword>
<keyword id="KW-0633">Potassium transport</keyword>
<keyword id="KW-0812">Transmembrane</keyword>
<keyword id="KW-1133">Transmembrane helix</keyword>
<keyword id="KW-0813">Transport</keyword>
<comment type="function">
    <text evidence="1">Contributes to K(+)/H(+) antiport activity by supporting proton efflux to control proton extrusion and homeostasis in chloroplasts in a light-dependent manner to modulate photosynthesis. Prevents excessive induction of non-photochemical quenching (NPQ) under continuous-light conditions. Indirectly promotes efficient inorganic carbon uptake into chloroplasts.</text>
</comment>
<comment type="catalytic activity">
    <reaction evidence="1">
        <text>K(+)(in) + H(+)(out) = K(+)(out) + H(+)(in)</text>
        <dbReference type="Rhea" id="RHEA:29467"/>
        <dbReference type="ChEBI" id="CHEBI:15378"/>
        <dbReference type="ChEBI" id="CHEBI:29103"/>
    </reaction>
</comment>
<comment type="subcellular location">
    <subcellularLocation>
        <location evidence="1">Plastid</location>
        <location evidence="1">Chloroplast inner membrane</location>
        <topology evidence="1">Multi-pass membrane protein</topology>
    </subcellularLocation>
</comment>
<comment type="similarity">
    <text evidence="1 2">Belongs to the CemA family.</text>
</comment>
<accession>A1E9K2</accession>
<dbReference type="EMBL" id="EF115541">
    <property type="protein sequence ID" value="ABK79424.1"/>
    <property type="molecule type" value="Genomic_DNA"/>
</dbReference>
<dbReference type="RefSeq" id="YP_010144437.1">
    <property type="nucleotide sequence ID" value="NC_056985.1"/>
</dbReference>
<dbReference type="RefSeq" id="YP_874664.1">
    <property type="nucleotide sequence ID" value="NC_008590.1"/>
</dbReference>
<dbReference type="GeneID" id="4525191"/>
<dbReference type="GeneID" id="67140744"/>
<dbReference type="GO" id="GO:0009706">
    <property type="term" value="C:chloroplast inner membrane"/>
    <property type="evidence" value="ECO:0007669"/>
    <property type="project" value="UniProtKB-SubCell"/>
</dbReference>
<dbReference type="GO" id="GO:0015297">
    <property type="term" value="F:antiporter activity"/>
    <property type="evidence" value="ECO:0007669"/>
    <property type="project" value="UniProtKB-KW"/>
</dbReference>
<dbReference type="GO" id="GO:0015078">
    <property type="term" value="F:proton transmembrane transporter activity"/>
    <property type="evidence" value="ECO:0007669"/>
    <property type="project" value="UniProtKB-UniRule"/>
</dbReference>
<dbReference type="GO" id="GO:0006813">
    <property type="term" value="P:potassium ion transport"/>
    <property type="evidence" value="ECO:0007669"/>
    <property type="project" value="UniProtKB-UniRule"/>
</dbReference>
<dbReference type="HAMAP" id="MF_01308">
    <property type="entry name" value="CemA_PxcA"/>
    <property type="match status" value="1"/>
</dbReference>
<dbReference type="InterPro" id="IPR004282">
    <property type="entry name" value="CemA"/>
</dbReference>
<dbReference type="PANTHER" id="PTHR33650:SF2">
    <property type="entry name" value="CHLOROPLAST ENVELOPE MEMBRANE PROTEIN"/>
    <property type="match status" value="1"/>
</dbReference>
<dbReference type="PANTHER" id="PTHR33650">
    <property type="entry name" value="CHLOROPLAST ENVELOPE MEMBRANE PROTEIN-RELATED"/>
    <property type="match status" value="1"/>
</dbReference>
<dbReference type="Pfam" id="PF03040">
    <property type="entry name" value="CemA"/>
    <property type="match status" value="1"/>
</dbReference>
<proteinExistence type="inferred from homology"/>
<sequence>MKKKKALPSLLYLVFIVLLPWGVSSSFNKCLELWIKNWWNTRQSETLLTDIQEKRILERFIELEELSLLDEMIKGKLKTHVQKPPTGIHKEIIQWVKINNEDHLHIILHFSTNIICLAILSGSFFLGKEELVILNSWVQEFFYNLNDSIKAFFILLVTDFFVGFHSTRGWELVIRWVYNDFGWAPNELIFTIFVCSFPVILDTCLKFWVFFCLNRLSPSLVVIYHSISEA</sequence>
<gene>
    <name evidence="1" type="primary">cemA</name>
</gene>
<reference key="1">
    <citation type="journal article" date="2007" name="Theor. Appl. Genet.">
        <title>Complete chloroplast genome sequences of Hordeum vulgare, Sorghum bicolor and Agrostis stolonifera, and comparative analyses with other grass genomes.</title>
        <authorList>
            <person name="Saski C."/>
            <person name="Lee S.-B."/>
            <person name="Fjellheim S."/>
            <person name="Guda C."/>
            <person name="Jansen R.K."/>
            <person name="Luo H."/>
            <person name="Tomkins J."/>
            <person name="Rognli O.A."/>
            <person name="Daniell H."/>
            <person name="Clarke J.L."/>
        </authorList>
    </citation>
    <scope>NUCLEOTIDE SEQUENCE [LARGE SCALE GENOMIC DNA]</scope>
    <source>
        <strain>cv. Morex</strain>
    </source>
</reference>